<accession>B4T2R7</accession>
<name>HFQ_SALNS</name>
<evidence type="ECO:0000255" key="1">
    <source>
        <dbReference type="HAMAP-Rule" id="MF_00436"/>
    </source>
</evidence>
<evidence type="ECO:0000255" key="2">
    <source>
        <dbReference type="PROSITE-ProRule" id="PRU01346"/>
    </source>
</evidence>
<evidence type="ECO:0000256" key="3">
    <source>
        <dbReference type="SAM" id="MobiDB-lite"/>
    </source>
</evidence>
<reference key="1">
    <citation type="journal article" date="2011" name="J. Bacteriol.">
        <title>Comparative genomics of 28 Salmonella enterica isolates: evidence for CRISPR-mediated adaptive sublineage evolution.</title>
        <authorList>
            <person name="Fricke W.F."/>
            <person name="Mammel M.K."/>
            <person name="McDermott P.F."/>
            <person name="Tartera C."/>
            <person name="White D.G."/>
            <person name="Leclerc J.E."/>
            <person name="Ravel J."/>
            <person name="Cebula T.A."/>
        </authorList>
    </citation>
    <scope>NUCLEOTIDE SEQUENCE [LARGE SCALE GENOMIC DNA]</scope>
    <source>
        <strain>SL254</strain>
    </source>
</reference>
<dbReference type="EMBL" id="CP001113">
    <property type="protein sequence ID" value="ACF64041.1"/>
    <property type="molecule type" value="Genomic_DNA"/>
</dbReference>
<dbReference type="RefSeq" id="WP_001051875.1">
    <property type="nucleotide sequence ID" value="NZ_CCMR01000003.1"/>
</dbReference>
<dbReference type="SMR" id="B4T2R7"/>
<dbReference type="KEGG" id="see:SNSL254_A4722"/>
<dbReference type="HOGENOM" id="CLU_113688_2_1_6"/>
<dbReference type="Proteomes" id="UP000008824">
    <property type="component" value="Chromosome"/>
</dbReference>
<dbReference type="GO" id="GO:0005829">
    <property type="term" value="C:cytosol"/>
    <property type="evidence" value="ECO:0007669"/>
    <property type="project" value="TreeGrafter"/>
</dbReference>
<dbReference type="GO" id="GO:0003723">
    <property type="term" value="F:RNA binding"/>
    <property type="evidence" value="ECO:0007669"/>
    <property type="project" value="UniProtKB-UniRule"/>
</dbReference>
<dbReference type="GO" id="GO:0006355">
    <property type="term" value="P:regulation of DNA-templated transcription"/>
    <property type="evidence" value="ECO:0007669"/>
    <property type="project" value="InterPro"/>
</dbReference>
<dbReference type="GO" id="GO:0043487">
    <property type="term" value="P:regulation of RNA stability"/>
    <property type="evidence" value="ECO:0007669"/>
    <property type="project" value="TreeGrafter"/>
</dbReference>
<dbReference type="GO" id="GO:0045974">
    <property type="term" value="P:regulation of translation, ncRNA-mediated"/>
    <property type="evidence" value="ECO:0007669"/>
    <property type="project" value="TreeGrafter"/>
</dbReference>
<dbReference type="CDD" id="cd01716">
    <property type="entry name" value="Hfq"/>
    <property type="match status" value="1"/>
</dbReference>
<dbReference type="FunFam" id="2.30.30.100:FF:000001">
    <property type="entry name" value="RNA-binding protein Hfq"/>
    <property type="match status" value="1"/>
</dbReference>
<dbReference type="Gene3D" id="2.30.30.100">
    <property type="match status" value="1"/>
</dbReference>
<dbReference type="HAMAP" id="MF_00436">
    <property type="entry name" value="Hfq"/>
    <property type="match status" value="1"/>
</dbReference>
<dbReference type="InterPro" id="IPR005001">
    <property type="entry name" value="Hfq"/>
</dbReference>
<dbReference type="InterPro" id="IPR010920">
    <property type="entry name" value="LSM_dom_sf"/>
</dbReference>
<dbReference type="InterPro" id="IPR047575">
    <property type="entry name" value="Sm"/>
</dbReference>
<dbReference type="NCBIfam" id="TIGR02383">
    <property type="entry name" value="Hfq"/>
    <property type="match status" value="1"/>
</dbReference>
<dbReference type="NCBIfam" id="NF001602">
    <property type="entry name" value="PRK00395.1"/>
    <property type="match status" value="1"/>
</dbReference>
<dbReference type="PANTHER" id="PTHR34772">
    <property type="entry name" value="RNA-BINDING PROTEIN HFQ"/>
    <property type="match status" value="1"/>
</dbReference>
<dbReference type="PANTHER" id="PTHR34772:SF1">
    <property type="entry name" value="RNA-BINDING PROTEIN HFQ"/>
    <property type="match status" value="1"/>
</dbReference>
<dbReference type="Pfam" id="PF17209">
    <property type="entry name" value="Hfq"/>
    <property type="match status" value="1"/>
</dbReference>
<dbReference type="SUPFAM" id="SSF50182">
    <property type="entry name" value="Sm-like ribonucleoproteins"/>
    <property type="match status" value="1"/>
</dbReference>
<dbReference type="PROSITE" id="PS52002">
    <property type="entry name" value="SM"/>
    <property type="match status" value="1"/>
</dbReference>
<gene>
    <name evidence="1" type="primary">hfq</name>
    <name type="ordered locus">SNSL254_A4722</name>
</gene>
<keyword id="KW-0694">RNA-binding</keyword>
<keyword id="KW-0346">Stress response</keyword>
<organism>
    <name type="scientific">Salmonella newport (strain SL254)</name>
    <dbReference type="NCBI Taxonomy" id="423368"/>
    <lineage>
        <taxon>Bacteria</taxon>
        <taxon>Pseudomonadati</taxon>
        <taxon>Pseudomonadota</taxon>
        <taxon>Gammaproteobacteria</taxon>
        <taxon>Enterobacterales</taxon>
        <taxon>Enterobacteriaceae</taxon>
        <taxon>Salmonella</taxon>
    </lineage>
</organism>
<protein>
    <recommendedName>
        <fullName evidence="1">RNA-binding protein Hfq</fullName>
    </recommendedName>
</protein>
<comment type="function">
    <text evidence="1">RNA chaperone that binds small regulatory RNA (sRNAs) and mRNAs to facilitate mRNA translational regulation in response to envelope stress, environmental stress and changes in metabolite concentrations. Also binds with high specificity to tRNAs.</text>
</comment>
<comment type="subunit">
    <text evidence="1">Homohexamer.</text>
</comment>
<comment type="similarity">
    <text evidence="1">Belongs to the Hfq family.</text>
</comment>
<feature type="chain" id="PRO_1000190356" description="RNA-binding protein Hfq">
    <location>
        <begin position="1"/>
        <end position="102"/>
    </location>
</feature>
<feature type="domain" description="Sm" evidence="2">
    <location>
        <begin position="9"/>
        <end position="68"/>
    </location>
</feature>
<feature type="region of interest" description="Disordered" evidence="3">
    <location>
        <begin position="63"/>
        <end position="102"/>
    </location>
</feature>
<feature type="compositionally biased region" description="Low complexity" evidence="3">
    <location>
        <begin position="70"/>
        <end position="88"/>
    </location>
</feature>
<sequence length="102" mass="11133">MAKGQSLQDPFLNALRRERVPVSIYLVNGIKLQGQIESFDQFVILLKNTVSQMVYKHAISTVVPSRPVSHHSNNAGGGASNNYHHGSNAQGSTAQQDSEETE</sequence>
<proteinExistence type="inferred from homology"/>